<accession>A8G7E2</accession>
<dbReference type="EMBL" id="CP000825">
    <property type="protein sequence ID" value="ABV51523.1"/>
    <property type="molecule type" value="Genomic_DNA"/>
</dbReference>
<dbReference type="RefSeq" id="WP_002805064.1">
    <property type="nucleotide sequence ID" value="NC_009840.1"/>
</dbReference>
<dbReference type="SMR" id="A8G7E2"/>
<dbReference type="STRING" id="93060.P9215_19101"/>
<dbReference type="KEGG" id="pmh:P9215_19101"/>
<dbReference type="eggNOG" id="COG0290">
    <property type="taxonomic scope" value="Bacteria"/>
</dbReference>
<dbReference type="HOGENOM" id="CLU_054919_3_2_3"/>
<dbReference type="OrthoDB" id="9806014at2"/>
<dbReference type="Proteomes" id="UP000002014">
    <property type="component" value="Chromosome"/>
</dbReference>
<dbReference type="GO" id="GO:0005829">
    <property type="term" value="C:cytosol"/>
    <property type="evidence" value="ECO:0007669"/>
    <property type="project" value="TreeGrafter"/>
</dbReference>
<dbReference type="GO" id="GO:0016020">
    <property type="term" value="C:membrane"/>
    <property type="evidence" value="ECO:0007669"/>
    <property type="project" value="TreeGrafter"/>
</dbReference>
<dbReference type="GO" id="GO:0043022">
    <property type="term" value="F:ribosome binding"/>
    <property type="evidence" value="ECO:0007669"/>
    <property type="project" value="TreeGrafter"/>
</dbReference>
<dbReference type="GO" id="GO:0003743">
    <property type="term" value="F:translation initiation factor activity"/>
    <property type="evidence" value="ECO:0007669"/>
    <property type="project" value="UniProtKB-UniRule"/>
</dbReference>
<dbReference type="GO" id="GO:0032790">
    <property type="term" value="P:ribosome disassembly"/>
    <property type="evidence" value="ECO:0007669"/>
    <property type="project" value="TreeGrafter"/>
</dbReference>
<dbReference type="FunFam" id="3.10.20.80:FF:000001">
    <property type="entry name" value="Translation initiation factor IF-3"/>
    <property type="match status" value="1"/>
</dbReference>
<dbReference type="FunFam" id="3.30.110.10:FF:000001">
    <property type="entry name" value="Translation initiation factor IF-3"/>
    <property type="match status" value="1"/>
</dbReference>
<dbReference type="Gene3D" id="3.30.110.10">
    <property type="entry name" value="Translation initiation factor 3 (IF-3), C-terminal domain"/>
    <property type="match status" value="1"/>
</dbReference>
<dbReference type="Gene3D" id="3.10.20.80">
    <property type="entry name" value="Translation initiation factor 3 (IF-3), N-terminal domain"/>
    <property type="match status" value="1"/>
</dbReference>
<dbReference type="HAMAP" id="MF_00080">
    <property type="entry name" value="IF_3"/>
    <property type="match status" value="1"/>
</dbReference>
<dbReference type="InterPro" id="IPR036788">
    <property type="entry name" value="T_IF-3_C_sf"/>
</dbReference>
<dbReference type="InterPro" id="IPR036787">
    <property type="entry name" value="T_IF-3_N_sf"/>
</dbReference>
<dbReference type="InterPro" id="IPR019813">
    <property type="entry name" value="Translation_initiation_fac3_CS"/>
</dbReference>
<dbReference type="InterPro" id="IPR001288">
    <property type="entry name" value="Translation_initiation_fac_3"/>
</dbReference>
<dbReference type="InterPro" id="IPR019815">
    <property type="entry name" value="Translation_initiation_fac_3_C"/>
</dbReference>
<dbReference type="InterPro" id="IPR019814">
    <property type="entry name" value="Translation_initiation_fac_3_N"/>
</dbReference>
<dbReference type="NCBIfam" id="TIGR00168">
    <property type="entry name" value="infC"/>
    <property type="match status" value="1"/>
</dbReference>
<dbReference type="PANTHER" id="PTHR10938">
    <property type="entry name" value="TRANSLATION INITIATION FACTOR IF-3"/>
    <property type="match status" value="1"/>
</dbReference>
<dbReference type="PANTHER" id="PTHR10938:SF0">
    <property type="entry name" value="TRANSLATION INITIATION FACTOR IF-3, MITOCHONDRIAL"/>
    <property type="match status" value="1"/>
</dbReference>
<dbReference type="Pfam" id="PF00707">
    <property type="entry name" value="IF3_C"/>
    <property type="match status" value="1"/>
</dbReference>
<dbReference type="Pfam" id="PF05198">
    <property type="entry name" value="IF3_N"/>
    <property type="match status" value="1"/>
</dbReference>
<dbReference type="SUPFAM" id="SSF55200">
    <property type="entry name" value="Translation initiation factor IF3, C-terminal domain"/>
    <property type="match status" value="1"/>
</dbReference>
<dbReference type="SUPFAM" id="SSF54364">
    <property type="entry name" value="Translation initiation factor IF3, N-terminal domain"/>
    <property type="match status" value="1"/>
</dbReference>
<dbReference type="PROSITE" id="PS00938">
    <property type="entry name" value="IF3"/>
    <property type="match status" value="1"/>
</dbReference>
<name>IF3_PROM2</name>
<keyword id="KW-0963">Cytoplasm</keyword>
<keyword id="KW-0396">Initiation factor</keyword>
<keyword id="KW-0648">Protein biosynthesis</keyword>
<sequence>MPPRPRFDRRAPVRELPNINERIKYPQLRVVDSDGKQLGVIDRLKALEIANQRELDLVLVSEKANPPVCRIMDYGKYKFEQEKKAKEARKKSHQTEVKEVKMRYKIDKHDYDVRIGQATKFLKSGDKVKCTVIFRGREIQHSNLAETLLLKMASDLEEQSEVQQKPKREGRNMIMFLSPRKSPLIKKDNE</sequence>
<reference key="1">
    <citation type="journal article" date="2007" name="PLoS Genet.">
        <title>Patterns and implications of gene gain and loss in the evolution of Prochlorococcus.</title>
        <authorList>
            <person name="Kettler G.C."/>
            <person name="Martiny A.C."/>
            <person name="Huang K."/>
            <person name="Zucker J."/>
            <person name="Coleman M.L."/>
            <person name="Rodrigue S."/>
            <person name="Chen F."/>
            <person name="Lapidus A."/>
            <person name="Ferriera S."/>
            <person name="Johnson J."/>
            <person name="Steglich C."/>
            <person name="Church G.M."/>
            <person name="Richardson P."/>
            <person name="Chisholm S.W."/>
        </authorList>
    </citation>
    <scope>NUCLEOTIDE SEQUENCE [LARGE SCALE GENOMIC DNA]</scope>
    <source>
        <strain>MIT 9215</strain>
    </source>
</reference>
<organism>
    <name type="scientific">Prochlorococcus marinus (strain MIT 9215)</name>
    <dbReference type="NCBI Taxonomy" id="93060"/>
    <lineage>
        <taxon>Bacteria</taxon>
        <taxon>Bacillati</taxon>
        <taxon>Cyanobacteriota</taxon>
        <taxon>Cyanophyceae</taxon>
        <taxon>Synechococcales</taxon>
        <taxon>Prochlorococcaceae</taxon>
        <taxon>Prochlorococcus</taxon>
    </lineage>
</organism>
<evidence type="ECO:0000255" key="1">
    <source>
        <dbReference type="HAMAP-Rule" id="MF_00080"/>
    </source>
</evidence>
<evidence type="ECO:0000256" key="2">
    <source>
        <dbReference type="SAM" id="MobiDB-lite"/>
    </source>
</evidence>
<protein>
    <recommendedName>
        <fullName evidence="1">Translation initiation factor IF-3</fullName>
    </recommendedName>
</protein>
<gene>
    <name evidence="1" type="primary">infC</name>
    <name type="ordered locus">P9215_19101</name>
</gene>
<feature type="chain" id="PRO_1000057531" description="Translation initiation factor IF-3">
    <location>
        <begin position="1"/>
        <end position="190"/>
    </location>
</feature>
<feature type="region of interest" description="Disordered" evidence="2">
    <location>
        <begin position="159"/>
        <end position="190"/>
    </location>
</feature>
<comment type="function">
    <text evidence="1">IF-3 binds to the 30S ribosomal subunit and shifts the equilibrium between 70S ribosomes and their 50S and 30S subunits in favor of the free subunits, thus enhancing the availability of 30S subunits on which protein synthesis initiation begins.</text>
</comment>
<comment type="subunit">
    <text evidence="1">Monomer.</text>
</comment>
<comment type="subcellular location">
    <subcellularLocation>
        <location evidence="1">Cytoplasm</location>
    </subcellularLocation>
</comment>
<comment type="similarity">
    <text evidence="1">Belongs to the IF-3 family.</text>
</comment>
<proteinExistence type="inferred from homology"/>